<reference key="1">
    <citation type="journal article" date="2009" name="PLoS Biol.">
        <title>Lineage-specific biology revealed by a finished genome assembly of the mouse.</title>
        <authorList>
            <person name="Church D.M."/>
            <person name="Goodstadt L."/>
            <person name="Hillier L.W."/>
            <person name="Zody M.C."/>
            <person name="Goldstein S."/>
            <person name="She X."/>
            <person name="Bult C.J."/>
            <person name="Agarwala R."/>
            <person name="Cherry J.L."/>
            <person name="DiCuccio M."/>
            <person name="Hlavina W."/>
            <person name="Kapustin Y."/>
            <person name="Meric P."/>
            <person name="Maglott D."/>
            <person name="Birtle Z."/>
            <person name="Marques A.C."/>
            <person name="Graves T."/>
            <person name="Zhou S."/>
            <person name="Teague B."/>
            <person name="Potamousis K."/>
            <person name="Churas C."/>
            <person name="Place M."/>
            <person name="Herschleb J."/>
            <person name="Runnheim R."/>
            <person name="Forrest D."/>
            <person name="Amos-Landgraf J."/>
            <person name="Schwartz D.C."/>
            <person name="Cheng Z."/>
            <person name="Lindblad-Toh K."/>
            <person name="Eichler E.E."/>
            <person name="Ponting C.P."/>
        </authorList>
    </citation>
    <scope>NUCLEOTIDE SEQUENCE [LARGE SCALE GENOMIC DNA]</scope>
    <source>
        <strain>C57BL/6J</strain>
    </source>
</reference>
<reference key="2">
    <citation type="journal article" date="1981" name="J. Biol. Chem.">
        <title>Quantitative determination of histone modification. H2A acetylation and phosphorylation.</title>
        <authorList>
            <person name="Pantazis P."/>
            <person name="Bonner W.M."/>
        </authorList>
    </citation>
    <scope>PHOSPHORYLATION AT SER-2</scope>
    <scope>ACETYLATION AT SER-2 AND LYS-6</scope>
</reference>
<reference key="3">
    <citation type="journal article" date="2004" name="Dev. Cell">
        <title>Polycomb group proteins Ring1A/B link ubiquitylation of histone H2A to heritable gene silencing and X inactivation.</title>
        <authorList>
            <person name="de Napoles M."/>
            <person name="Mermoud J.E."/>
            <person name="Wakao R."/>
            <person name="Tang Y.A."/>
            <person name="Endoh M."/>
            <person name="Appanah R."/>
            <person name="Nesterova T.B."/>
            <person name="Silva J."/>
            <person name="Otte A.P."/>
            <person name="Vidal M."/>
            <person name="Koseki H."/>
            <person name="Brockdorff N."/>
        </authorList>
    </citation>
    <scope>UBIQUITINATION AT LYS-120</scope>
</reference>
<reference key="4">
    <citation type="journal article" date="2004" name="J. Biol. Chem.">
        <title>Ring1b-mediated H2A ubiquitination associates with inactive X chromosomes and is involved in initiation of X inactivation.</title>
        <authorList>
            <person name="Fang J."/>
            <person name="Chen T."/>
            <person name="Chadwick B."/>
            <person name="Li E."/>
            <person name="Zhang Y."/>
        </authorList>
    </citation>
    <scope>UBIQUITINATION AT LYS-120</scope>
</reference>
<reference key="5">
    <citation type="journal article" date="2006" name="Nat. Cell Biol.">
        <title>Blimp1 associates with Prmt5 and directs histone arginine methylation in mouse germ cells.</title>
        <authorList>
            <person name="Ancelin K."/>
            <person name="Lange U.C."/>
            <person name="Hajkova P."/>
            <person name="Schneider R."/>
            <person name="Bannister A.J."/>
            <person name="Kouzarides T."/>
            <person name="Surani M.A."/>
        </authorList>
    </citation>
    <scope>METHYLATION AT ARG-4</scope>
</reference>
<reference key="6">
    <citation type="journal article" date="2011" name="Cell">
        <title>Identification of 67 histone marks and histone lysine crotonylation as a new type of histone modification.</title>
        <authorList>
            <person name="Tan M."/>
            <person name="Luo H."/>
            <person name="Lee S."/>
            <person name="Jin F."/>
            <person name="Yang J.S."/>
            <person name="Montellier E."/>
            <person name="Buchou T."/>
            <person name="Cheng Z."/>
            <person name="Rousseaux S."/>
            <person name="Rajagopal N."/>
            <person name="Lu Z."/>
            <person name="Ye Z."/>
            <person name="Zhu Q."/>
            <person name="Wysocka J."/>
            <person name="Ye Y."/>
            <person name="Khochbin S."/>
            <person name="Ren B."/>
            <person name="Zhao Y."/>
        </authorList>
    </citation>
    <scope>CROTONYLATION AT LYS-37 AND LYS-119</scope>
</reference>
<reference key="7">
    <citation type="journal article" date="2014" name="Nat. Chem. Biol.">
        <title>Lysine 2-hydroxyisobutyrylation is a widely distributed active histone mark.</title>
        <authorList>
            <person name="Dai L."/>
            <person name="Peng C."/>
            <person name="Montellier E."/>
            <person name="Lu Z."/>
            <person name="Chen Y."/>
            <person name="Ishii H."/>
            <person name="Debernardi A."/>
            <person name="Buchou T."/>
            <person name="Rousseaux S."/>
            <person name="Jin F."/>
            <person name="Sabari B.R."/>
            <person name="Deng Z."/>
            <person name="Allis C.D."/>
            <person name="Ren B."/>
            <person name="Khochbin S."/>
            <person name="Zhao Y."/>
        </authorList>
    </citation>
    <scope>HYDROXYBUTYRYLATION AT LYS-6; LYS-10; LYS-37; LYS-75; LYS-76; LYS-96 AND LYS-119</scope>
</reference>
<reference key="8">
    <citation type="journal article" date="2014" name="Nature">
        <title>Glutamine methylation in histone H2A is an RNA-polymerase-I-dedicated modification.</title>
        <authorList>
            <person name="Tessarz P."/>
            <person name="Santos-Rosa H."/>
            <person name="Robson S.C."/>
            <person name="Sylvestersen K.B."/>
            <person name="Nelson C.J."/>
            <person name="Nielsen M.L."/>
            <person name="Kouzarides T."/>
        </authorList>
    </citation>
    <scope>METHYLATION AT GLN-105</scope>
</reference>
<reference key="9">
    <citation type="journal article" date="2016" name="Mol. Cell">
        <title>Metabolic regulation of gene expression by histone lysine beta-hydroxybutyrylation.</title>
        <authorList>
            <person name="Xie Z."/>
            <person name="Zhang D."/>
            <person name="Chung D."/>
            <person name="Tang Z."/>
            <person name="Huang H."/>
            <person name="Dai L."/>
            <person name="Qi S."/>
            <person name="Li J."/>
            <person name="Colak G."/>
            <person name="Chen Y."/>
            <person name="Xia C."/>
            <person name="Peng C."/>
            <person name="Ruan H."/>
            <person name="Kirkey M."/>
            <person name="Wang D."/>
            <person name="Jensen L.M."/>
            <person name="Kwon O.K."/>
            <person name="Lee S."/>
            <person name="Pletcher S.D."/>
            <person name="Tan M."/>
            <person name="Lombard D.B."/>
            <person name="White K.P."/>
            <person name="Zhao H."/>
            <person name="Li J."/>
            <person name="Roeder R.G."/>
            <person name="Yang X."/>
            <person name="Zhao Y."/>
        </authorList>
    </citation>
    <scope>HYDROXYBUTYRYLATION AT LYS-6; LYS-37; LYS-120 AND LYS-126</scope>
</reference>
<sequence>MSGRGKQGGKARAKAKTRSSRAGLQFPVGRVHRLLRKGNYSERVGAGAPVYLAAVLEYLTAEILELAGNAARDNKKTRIIPRHLQLAIRNDEELNKLLGRVTIAQGGVLPNIQAVLLPKKTESHHKAKGK</sequence>
<accession>C0HKE9</accession>
<accession>P10812</accession>
<accession>P22752</accession>
<accession>Q149U0</accession>
<accession>Q5SZZ2</accession>
<dbReference type="EMBL" id="AL589879">
    <property type="status" value="NOT_ANNOTATED_CDS"/>
    <property type="molecule type" value="Genomic_DNA"/>
</dbReference>
<dbReference type="CCDS" id="CCDS26301.1"/>
<dbReference type="RefSeq" id="NP_001171015.1">
    <property type="nucleotide sequence ID" value="NM_001177544.2"/>
</dbReference>
<dbReference type="RefSeq" id="NP_835492.1">
    <property type="nucleotide sequence ID" value="NM_178185.2"/>
</dbReference>
<dbReference type="SMR" id="C0HKE9"/>
<dbReference type="FunCoup" id="C0HKE9">
    <property type="interactions" value="830"/>
</dbReference>
<dbReference type="iPTMnet" id="C0HKE9"/>
<dbReference type="jPOST" id="C0HKE9"/>
<dbReference type="Pumba" id="C0HKE9"/>
<dbReference type="Antibodypedia" id="72464">
    <property type="antibodies" value="208 antibodies from 18 providers"/>
</dbReference>
<dbReference type="DNASU" id="319172"/>
<dbReference type="Ensembl" id="ENSMUST00000070124.5">
    <property type="protein sequence ID" value="ENSMUSP00000088285.3"/>
    <property type="gene ID" value="ENSMUSG00000071516.3"/>
</dbReference>
<dbReference type="Ensembl" id="ENSMUST00000078369.3">
    <property type="protein sequence ID" value="ENSMUSP00000077477.2"/>
    <property type="gene ID" value="ENSMUSG00000061615.3"/>
</dbReference>
<dbReference type="Ensembl" id="ENSMUST00000081342.7">
    <property type="protein sequence ID" value="ENSMUSP00000080088.6"/>
    <property type="gene ID" value="ENSMUSG00000094777.3"/>
</dbReference>
<dbReference type="Ensembl" id="ENSMUST00000090776.7">
    <property type="protein sequence ID" value="ENSMUSP00000088281.5"/>
    <property type="gene ID" value="ENSMUSG00000071478.7"/>
</dbReference>
<dbReference type="Ensembl" id="ENSMUST00000091741.6">
    <property type="protein sequence ID" value="ENSMUSP00000089335.5"/>
    <property type="gene ID" value="ENSMUSG00000069301.6"/>
</dbReference>
<dbReference type="Ensembl" id="ENSMUST00000091745.6">
    <property type="protein sequence ID" value="ENSMUSP00000089339.6"/>
    <property type="gene ID" value="ENSMUSG00000094248.2"/>
</dbReference>
<dbReference type="Ensembl" id="ENSMUST00000091751.3">
    <property type="protein sequence ID" value="ENSMUSP00000089345.3"/>
    <property type="gene ID" value="ENSMUSG00000069309.3"/>
</dbReference>
<dbReference type="Ensembl" id="ENSMUST00000102969.6">
    <property type="protein sequence ID" value="ENSMUSP00000100034.4"/>
    <property type="gene ID" value="ENSMUSG00000069272.7"/>
</dbReference>
<dbReference type="Ensembl" id="ENSMUST00000171127.4">
    <property type="protein sequence ID" value="ENSMUSP00000127684.2"/>
    <property type="gene ID" value="ENSMUSG00000069270.7"/>
</dbReference>
<dbReference type="GeneID" id="319171"/>
<dbReference type="GeneID" id="665433"/>
<dbReference type="KEGG" id="mmu:319164"/>
<dbReference type="KEGG" id="mmu:319165"/>
<dbReference type="KEGG" id="mmu:319166"/>
<dbReference type="KEGG" id="mmu:319167"/>
<dbReference type="KEGG" id="mmu:319170"/>
<dbReference type="KEGG" id="mmu:319171"/>
<dbReference type="KEGG" id="mmu:319172"/>
<dbReference type="KEGG" id="mmu:319191"/>
<dbReference type="KEGG" id="mmu:665433"/>
<dbReference type="AGR" id="MGI:3710573"/>
<dbReference type="CTD" id="3012"/>
<dbReference type="CTD" id="3013"/>
<dbReference type="CTD" id="319170"/>
<dbReference type="CTD" id="319171"/>
<dbReference type="CTD" id="665433"/>
<dbReference type="CTD" id="8329"/>
<dbReference type="CTD" id="8334"/>
<dbReference type="CTD" id="8335"/>
<dbReference type="CTD" id="8969"/>
<dbReference type="MGI" id="MGI:3710573">
    <property type="gene designation" value="Hist1h2ap"/>
</dbReference>
<dbReference type="VEuPathDB" id="HostDB:ENSMUSG00000061615"/>
<dbReference type="VEuPathDB" id="HostDB:ENSMUSG00000069270"/>
<dbReference type="VEuPathDB" id="HostDB:ENSMUSG00000069272"/>
<dbReference type="VEuPathDB" id="HostDB:ENSMUSG00000069301"/>
<dbReference type="VEuPathDB" id="HostDB:ENSMUSG00000069309"/>
<dbReference type="VEuPathDB" id="HostDB:ENSMUSG00000071478"/>
<dbReference type="VEuPathDB" id="HostDB:ENSMUSG00000071516"/>
<dbReference type="VEuPathDB" id="HostDB:ENSMUSG00000094248"/>
<dbReference type="VEuPathDB" id="HostDB:ENSMUSG00000094777"/>
<dbReference type="GeneTree" id="ENSGT00940000153092"/>
<dbReference type="InParanoid" id="C0HKE9"/>
<dbReference type="OMA" id="TEDCRQT"/>
<dbReference type="OrthoDB" id="9610409at2759"/>
<dbReference type="Reactome" id="R-MMU-110330">
    <property type="pathway name" value="Recognition and association of DNA glycosylase with site containing an affected purine"/>
</dbReference>
<dbReference type="Reactome" id="R-MMU-110331">
    <property type="pathway name" value="Cleavage of the damaged purine"/>
</dbReference>
<dbReference type="Reactome" id="R-MMU-212300">
    <property type="pathway name" value="PRC2 methylates histones and DNA"/>
</dbReference>
<dbReference type="Reactome" id="R-MMU-2299718">
    <property type="pathway name" value="Condensation of Prophase Chromosomes"/>
</dbReference>
<dbReference type="Reactome" id="R-MMU-2559586">
    <property type="pathway name" value="DNA Damage/Telomere Stress Induced Senescence"/>
</dbReference>
<dbReference type="Reactome" id="R-MMU-3214815">
    <property type="pathway name" value="HDACs deacetylate histones"/>
</dbReference>
<dbReference type="Reactome" id="R-MMU-3214858">
    <property type="pathway name" value="RMTs methylate histone arginines"/>
</dbReference>
<dbReference type="Reactome" id="R-MMU-5689603">
    <property type="pathway name" value="UCH proteinases"/>
</dbReference>
<dbReference type="Reactome" id="R-MMU-5689880">
    <property type="pathway name" value="Ub-specific processing proteases"/>
</dbReference>
<dbReference type="Reactome" id="R-MMU-5689901">
    <property type="pathway name" value="Metalloprotease DUBs"/>
</dbReference>
<dbReference type="Reactome" id="R-MMU-606279">
    <property type="pathway name" value="Deposition of new CENPA-containing nucleosomes at the centromere"/>
</dbReference>
<dbReference type="Reactome" id="R-MMU-8936459">
    <property type="pathway name" value="RUNX1 regulates genes involved in megakaryocyte differentiation and platelet function"/>
</dbReference>
<dbReference type="Reactome" id="R-MMU-9670095">
    <property type="pathway name" value="Inhibition of DNA recombination at telomere"/>
</dbReference>
<dbReference type="Reactome" id="R-MMU-9841922">
    <property type="pathway name" value="MLL4 and MLL3 complexes regulate expression of PPARG target genes in adipogenesis and hepatic steatosis"/>
</dbReference>
<dbReference type="Reactome" id="R-MMU-9843940">
    <property type="pathway name" value="Regulation of endogenous retroelements by KRAB-ZFP proteins"/>
</dbReference>
<dbReference type="BioGRID-ORCS" id="319164">
    <property type="hits" value="12 hits in 61 CRISPR screens"/>
</dbReference>
<dbReference type="BioGRID-ORCS" id="319165">
    <property type="hits" value="11 hits in 41 CRISPR screens"/>
</dbReference>
<dbReference type="BioGRID-ORCS" id="319166">
    <property type="hits" value="13 hits in 57 CRISPR screens"/>
</dbReference>
<dbReference type="BioGRID-ORCS" id="319167">
    <property type="hits" value="12 hits in 44 CRISPR screens"/>
</dbReference>
<dbReference type="BioGRID-ORCS" id="319170">
    <property type="hits" value="14 hits in 59 CRISPR screens"/>
</dbReference>
<dbReference type="BioGRID-ORCS" id="319171">
    <property type="hits" value="14 hits in 43 CRISPR screens"/>
</dbReference>
<dbReference type="BioGRID-ORCS" id="319172">
    <property type="hits" value="9 hits in 57 CRISPR screens"/>
</dbReference>
<dbReference type="BioGRID-ORCS" id="319191">
    <property type="hits" value="10 hits in 58 CRISPR screens"/>
</dbReference>
<dbReference type="BioGRID-ORCS" id="665433">
    <property type="hits" value="10 hits in 42 CRISPR screens"/>
</dbReference>
<dbReference type="PRO" id="PR:C0HKE9"/>
<dbReference type="Proteomes" id="UP000000589">
    <property type="component" value="Chromosome 13"/>
</dbReference>
<dbReference type="RNAct" id="C0HKE9">
    <property type="molecule type" value="protein"/>
</dbReference>
<dbReference type="Bgee" id="ENSMUSG00000061615">
    <property type="expression patterns" value="Expressed in uterus and 49 other cell types or tissues"/>
</dbReference>
<dbReference type="ExpressionAtlas" id="C0HKE9">
    <property type="expression patterns" value="baseline and differential"/>
</dbReference>
<dbReference type="GO" id="GO:0000786">
    <property type="term" value="C:nucleosome"/>
    <property type="evidence" value="ECO:0007669"/>
    <property type="project" value="UniProtKB-KW"/>
</dbReference>
<dbReference type="GO" id="GO:0005634">
    <property type="term" value="C:nucleus"/>
    <property type="evidence" value="ECO:0007669"/>
    <property type="project" value="UniProtKB-SubCell"/>
</dbReference>
<dbReference type="GO" id="GO:0003677">
    <property type="term" value="F:DNA binding"/>
    <property type="evidence" value="ECO:0007669"/>
    <property type="project" value="UniProtKB-KW"/>
</dbReference>
<dbReference type="GO" id="GO:0046982">
    <property type="term" value="F:protein heterodimerization activity"/>
    <property type="evidence" value="ECO:0007669"/>
    <property type="project" value="InterPro"/>
</dbReference>
<dbReference type="GO" id="GO:0030527">
    <property type="term" value="F:structural constituent of chromatin"/>
    <property type="evidence" value="ECO:0007669"/>
    <property type="project" value="InterPro"/>
</dbReference>
<dbReference type="CDD" id="cd00074">
    <property type="entry name" value="HFD_H2A"/>
    <property type="match status" value="1"/>
</dbReference>
<dbReference type="FunFam" id="1.10.20.10:FF:000103">
    <property type="entry name" value="Histone H2A type 1"/>
    <property type="match status" value="1"/>
</dbReference>
<dbReference type="Gene3D" id="1.10.20.10">
    <property type="entry name" value="Histone, subunit A"/>
    <property type="match status" value="1"/>
</dbReference>
<dbReference type="InterPro" id="IPR009072">
    <property type="entry name" value="Histone-fold"/>
</dbReference>
<dbReference type="InterPro" id="IPR002119">
    <property type="entry name" value="Histone_H2A"/>
</dbReference>
<dbReference type="InterPro" id="IPR007125">
    <property type="entry name" value="Histone_H2A/H2B/H3"/>
</dbReference>
<dbReference type="InterPro" id="IPR032454">
    <property type="entry name" value="Histone_H2A_C"/>
</dbReference>
<dbReference type="InterPro" id="IPR032458">
    <property type="entry name" value="Histone_H2A_CS"/>
</dbReference>
<dbReference type="PANTHER" id="PTHR23430">
    <property type="entry name" value="HISTONE H2A"/>
    <property type="match status" value="1"/>
</dbReference>
<dbReference type="Pfam" id="PF00125">
    <property type="entry name" value="Histone"/>
    <property type="match status" value="1"/>
</dbReference>
<dbReference type="Pfam" id="PF16211">
    <property type="entry name" value="Histone_H2A_C"/>
    <property type="match status" value="1"/>
</dbReference>
<dbReference type="PRINTS" id="PR00620">
    <property type="entry name" value="HISTONEH2A"/>
</dbReference>
<dbReference type="SMART" id="SM00414">
    <property type="entry name" value="H2A"/>
    <property type="match status" value="1"/>
</dbReference>
<dbReference type="SUPFAM" id="SSF47113">
    <property type="entry name" value="Histone-fold"/>
    <property type="match status" value="1"/>
</dbReference>
<dbReference type="PROSITE" id="PS00046">
    <property type="entry name" value="HISTONE_H2A"/>
    <property type="match status" value="1"/>
</dbReference>
<comment type="function">
    <text>Core component of nucleosome. Nucleosomes wrap and compact DNA into chromatin, limiting DNA accessibility to the cellular machineries which require DNA as a template. Histones thereby play a central role in transcription regulation, DNA repair, DNA replication and chromosomal stability. DNA accessibility is regulated via a complex set of post-translational modifications of histones, also called histone code, and nucleosome remodeling.</text>
</comment>
<comment type="subunit">
    <text>The nucleosome is a histone octamer containing two molecules each of H2A, H2B, H3 and H4 assembled in one H3-H4 heterotetramer and two H2A-H2B heterodimers. The octamer wraps approximately 147 bp of DNA.</text>
</comment>
<comment type="subcellular location">
    <subcellularLocation>
        <location>Nucleus</location>
    </subcellularLocation>
    <subcellularLocation>
        <location>Chromosome</location>
    </subcellularLocation>
</comment>
<comment type="PTM">
    <text evidence="3">Deiminated on Arg-4 in granulocytes upon calcium entry.</text>
</comment>
<comment type="PTM">
    <text evidence="3 5 6 9">Monoubiquitination of Lys-120 (H2AK119Ub) by RING1, TRIM37 and RNF2/RING2 complex gives a specific tag for epigenetic transcriptional repression and participates in X chromosome inactivation of female mammals. It is involved in the initiation of both imprinted and random X inactivation. Ubiquitinated H2A is enriched in inactive X chromosome chromatin. Ubiquitination of H2A functions downstream of methylation of 'Lys-27' of histone H3 (H3K27me). H2AK119Ub by RNF2/RING2 can also be induced by ultraviolet and may be involved in DNA repair. Following DNA double-strand breaks (DSBs), it is ubiquitinated through 'Lys-63' linkage of ubiquitin moieties by the E2 ligase UBE2N and the E3 ligases RNF8 and RNF168, leading to the recruitment of repair proteins to sites of DNA damage. Ubiquitination at Lys-14 and Lys-16 (H2AK13Ub and H2AK15Ub, respectively) in response to DNA damage is initiated by RNF168 that mediates monoubiquitination at these 2 sites, and 'Lys-63'-linked ubiquitin are then conjugated to monoubiquitin; RNF8 is able to extend 'Lys-63'-linked ubiquitin chains in vitro. Deubiquitinated by USP51 at Lys-14 and Lys-16 (H2AK13Ub and H2AK15Ub, respectively) after damaged DNA is repaired (By similarity). H2AK119Ub and ionizing radiation-induced 'Lys-63'-linked ubiquitination (H2AK13Ub and H2AK15Ub) are distinct events.</text>
</comment>
<comment type="PTM">
    <text evidence="3 12">Phosphorylation on Ser-2 (H2AS1ph) is enhanced during mitosis. Phosphorylation on Ser-2 by RPS6KA5/MSK1 directly represses transcription. Acetylation of H3 inhibits Ser-2 phosphorylation by RPS6KA5/MSK1. Phosphorylation at Thr-121 (H2AT120ph) by DCAF1 is present in the regulatory region of many tumor suppresor genes and down-regulates their transcription.</text>
</comment>
<comment type="PTM">
    <text evidence="7">Symmetric dimethylation on Arg-4 by the PRDM1/PRMT5 complex may play a crucial role in the germ-cell lineage.</text>
</comment>
<comment type="PTM">
    <text evidence="9">Glutamine methylation at Gln-105 (H2AQ104me) by FBL is specifically dedicated to polymerase I. It is present at 35S ribosomal DNA locus and impairs binding of the FACT complex.</text>
</comment>
<comment type="PTM">
    <text evidence="8">Crotonylation (Kcr) is specifically present in male germ cells and marks testis-specific genes in post-meiotic cells, including X-linked genes that escape sex chromosome inactivation in haploid cells. Crotonylation marks active promoters and enhancers and confers resistance to transcriptional repressors. It is also associated with post-meiotically activated genes on autosomes.</text>
</comment>
<comment type="PTM">
    <text evidence="11">Hydroxybutyrylation of histones is induced by starvation.</text>
</comment>
<comment type="PTM">
    <text evidence="2">Lactylated in macrophages by EP300/P300 by using lactoyl-CoA directly derived from endogenous or exogenous lactate, leading to stimulates gene transcription.</text>
</comment>
<comment type="similarity">
    <text evidence="13">Belongs to the histone H2A family.</text>
</comment>
<gene>
    <name evidence="14" type="primary">Hist1h2ap</name>
</gene>
<feature type="initiator methionine" description="Removed" evidence="1">
    <location>
        <position position="1"/>
    </location>
</feature>
<feature type="chain" id="PRO_0000439723" description="Histone H2A type 1-P">
    <location>
        <begin position="2"/>
        <end position="130"/>
    </location>
</feature>
<feature type="region of interest" description="Disordered" evidence="4">
    <location>
        <begin position="1"/>
        <end position="22"/>
    </location>
</feature>
<feature type="compositionally biased region" description="Basic residues" evidence="4">
    <location>
        <begin position="7"/>
        <end position="19"/>
    </location>
</feature>
<feature type="modified residue" description="N-acetylserine" evidence="12">
    <location>
        <position position="2"/>
    </location>
</feature>
<feature type="modified residue" description="Phosphoserine; by RPS6KA5" evidence="12">
    <location>
        <position position="2"/>
    </location>
</feature>
<feature type="modified residue" description="Citrulline; alternate" evidence="3">
    <location>
        <position position="4"/>
    </location>
</feature>
<feature type="modified residue" description="Symmetric dimethylarginine; by PRMT5; alternate" evidence="7">
    <location>
        <position position="4"/>
    </location>
</feature>
<feature type="modified residue" description="N6-(2-hydroxyisobutyryl)lysine; alternate" evidence="10">
    <location>
        <position position="6"/>
    </location>
</feature>
<feature type="modified residue" description="N6-(beta-hydroxybutyryl)lysine; alternate" evidence="11">
    <location>
        <position position="6"/>
    </location>
</feature>
<feature type="modified residue" description="N6-acetyllysine; alternate" evidence="12">
    <location>
        <position position="6"/>
    </location>
</feature>
<feature type="modified residue" description="N6-(2-hydroxyisobutyryl)lysine; alternate" evidence="10">
    <location>
        <position position="10"/>
    </location>
</feature>
<feature type="modified residue" description="N6-lactoyllysine; alternate" evidence="2">
    <location>
        <position position="10"/>
    </location>
</feature>
<feature type="modified residue" description="N6-succinyllysine; alternate" evidence="1">
    <location>
        <position position="10"/>
    </location>
</feature>
<feature type="modified residue" description="N6-(2-hydroxyisobutyryl)lysine; alternate" evidence="10">
    <location>
        <position position="37"/>
    </location>
</feature>
<feature type="modified residue" description="N6-(beta-hydroxybutyryl)lysine; alternate" evidence="11">
    <location>
        <position position="37"/>
    </location>
</feature>
<feature type="modified residue" description="N6-crotonyllysine; alternate" evidence="8">
    <location>
        <position position="37"/>
    </location>
</feature>
<feature type="modified residue" description="N6-(2-hydroxyisobutyryl)lysine" evidence="10">
    <location>
        <position position="75"/>
    </location>
</feature>
<feature type="modified residue" description="N6-(2-hydroxyisobutyryl)lysine" evidence="10">
    <location>
        <position position="76"/>
    </location>
</feature>
<feature type="modified residue" description="N6-(2-hydroxyisobutyryl)lysine; alternate" evidence="10">
    <location>
        <position position="96"/>
    </location>
</feature>
<feature type="modified residue" description="N6-glutaryllysine; alternate" evidence="3">
    <location>
        <position position="96"/>
    </location>
</feature>
<feature type="modified residue" description="N6-succinyllysine; alternate" evidence="1">
    <location>
        <position position="96"/>
    </location>
</feature>
<feature type="modified residue" description="N5-methylglutamine" evidence="9">
    <location>
        <position position="105"/>
    </location>
</feature>
<feature type="modified residue" description="N6-(2-hydroxyisobutyryl)lysine; alternate" evidence="10">
    <location>
        <position position="119"/>
    </location>
</feature>
<feature type="modified residue" description="N6-crotonyllysine; alternate" evidence="8">
    <location>
        <position position="119"/>
    </location>
</feature>
<feature type="modified residue" description="N6-glutaryllysine; alternate" evidence="3">
    <location>
        <position position="119"/>
    </location>
</feature>
<feature type="modified residue" description="N6-(beta-hydroxybutyryl)lysine; alternate" evidence="11">
    <location>
        <position position="120"/>
    </location>
</feature>
<feature type="modified residue" description="N6-crotonyllysine; alternate" evidence="3">
    <location>
        <position position="120"/>
    </location>
</feature>
<feature type="modified residue" description="N6-glutaryllysine; alternate" evidence="3">
    <location>
        <position position="120"/>
    </location>
</feature>
<feature type="modified residue" description="Phosphothreonine; by DCAF1" evidence="1">
    <location>
        <position position="121"/>
    </location>
</feature>
<feature type="modified residue" description="N6-(beta-hydroxybutyryl)lysine; alternate" evidence="11">
    <location>
        <position position="126"/>
    </location>
</feature>
<feature type="modified residue" description="N6-crotonyllysine; alternate" evidence="3">
    <location>
        <position position="126"/>
    </location>
</feature>
<feature type="modified residue" description="N6-glutaryllysine; alternate" evidence="3">
    <location>
        <position position="126"/>
    </location>
</feature>
<feature type="cross-link" description="Glycyl lysine isopeptide (Lys-Gly) (interchain with G-Cter in ubiquitin)" evidence="1">
    <location>
        <position position="14"/>
    </location>
</feature>
<feature type="cross-link" description="Glycyl lysine isopeptide (Lys-Gly) (interchain with G-Cter in ubiquitin)" evidence="1">
    <location>
        <position position="16"/>
    </location>
</feature>
<feature type="cross-link" description="Glycyl lysine isopeptide (Lys-Gly) (interchain with G-Cter in ubiquitin); alternate" evidence="5 6">
    <location>
        <position position="120"/>
    </location>
</feature>
<proteinExistence type="evidence at protein level"/>
<organism>
    <name type="scientific">Mus musculus</name>
    <name type="common">Mouse</name>
    <dbReference type="NCBI Taxonomy" id="10090"/>
    <lineage>
        <taxon>Eukaryota</taxon>
        <taxon>Metazoa</taxon>
        <taxon>Chordata</taxon>
        <taxon>Craniata</taxon>
        <taxon>Vertebrata</taxon>
        <taxon>Euteleostomi</taxon>
        <taxon>Mammalia</taxon>
        <taxon>Eutheria</taxon>
        <taxon>Euarchontoglires</taxon>
        <taxon>Glires</taxon>
        <taxon>Rodentia</taxon>
        <taxon>Myomorpha</taxon>
        <taxon>Muroidea</taxon>
        <taxon>Muridae</taxon>
        <taxon>Murinae</taxon>
        <taxon>Mus</taxon>
        <taxon>Mus</taxon>
    </lineage>
</organism>
<name>H2A1P_MOUSE</name>
<protein>
    <recommendedName>
        <fullName evidence="13">Histone H2A type 1-P</fullName>
    </recommendedName>
</protein>
<keyword id="KW-0007">Acetylation</keyword>
<keyword id="KW-0158">Chromosome</keyword>
<keyword id="KW-0164">Citrullination</keyword>
<keyword id="KW-0238">DNA-binding</keyword>
<keyword id="KW-0379">Hydroxylation</keyword>
<keyword id="KW-1017">Isopeptide bond</keyword>
<keyword id="KW-0488">Methylation</keyword>
<keyword id="KW-0544">Nucleosome core</keyword>
<keyword id="KW-0539">Nucleus</keyword>
<keyword id="KW-0597">Phosphoprotein</keyword>
<keyword id="KW-1185">Reference proteome</keyword>
<keyword id="KW-0832">Ubl conjugation</keyword>
<evidence type="ECO:0000250" key="1">
    <source>
        <dbReference type="UniProtKB" id="P04908"/>
    </source>
</evidence>
<evidence type="ECO:0000250" key="2">
    <source>
        <dbReference type="UniProtKB" id="P0C0S5"/>
    </source>
</evidence>
<evidence type="ECO:0000250" key="3">
    <source>
        <dbReference type="UniProtKB" id="P0C0S8"/>
    </source>
</evidence>
<evidence type="ECO:0000256" key="4">
    <source>
        <dbReference type="SAM" id="MobiDB-lite"/>
    </source>
</evidence>
<evidence type="ECO:0000269" key="5">
    <source>
    </source>
</evidence>
<evidence type="ECO:0000269" key="6">
    <source>
    </source>
</evidence>
<evidence type="ECO:0000269" key="7">
    <source>
    </source>
</evidence>
<evidence type="ECO:0000269" key="8">
    <source>
    </source>
</evidence>
<evidence type="ECO:0000269" key="9">
    <source>
    </source>
</evidence>
<evidence type="ECO:0000269" key="10">
    <source>
    </source>
</evidence>
<evidence type="ECO:0000269" key="11">
    <source>
    </source>
</evidence>
<evidence type="ECO:0000269" key="12">
    <source>
    </source>
</evidence>
<evidence type="ECO:0000305" key="13"/>
<evidence type="ECO:0000312" key="14">
    <source>
        <dbReference type="MGI" id="MGI:3710573"/>
    </source>
</evidence>